<gene>
    <name type="primary">hsp16</name>
    <name type="ORF">SPBC3E7.02c</name>
</gene>
<evidence type="ECO:0000255" key="1">
    <source>
        <dbReference type="PROSITE-ProRule" id="PRU00285"/>
    </source>
</evidence>
<evidence type="ECO:0000269" key="2">
    <source>
    </source>
</evidence>
<evidence type="ECO:0007829" key="3">
    <source>
        <dbReference type="PDB" id="3W1Z"/>
    </source>
</evidence>
<dbReference type="EMBL" id="AB012619">
    <property type="protein sequence ID" value="BAA31521.1"/>
    <property type="molecule type" value="Genomic_DNA"/>
</dbReference>
<dbReference type="EMBL" id="AJ003817">
    <property type="protein sequence ID" value="CAA06031.1"/>
    <property type="molecule type" value="mRNA"/>
</dbReference>
<dbReference type="EMBL" id="CU329671">
    <property type="protein sequence ID" value="CAA19006.1"/>
    <property type="molecule type" value="Genomic_DNA"/>
</dbReference>
<dbReference type="PIR" id="T40376">
    <property type="entry name" value="T40376"/>
</dbReference>
<dbReference type="RefSeq" id="NP_596091.1">
    <property type="nucleotide sequence ID" value="NM_001022007.2"/>
</dbReference>
<dbReference type="PDB" id="3W1Z">
    <property type="method" value="X-ray"/>
    <property type="resolution" value="2.40 A"/>
    <property type="chains" value="A/B/C/D=1-143"/>
</dbReference>
<dbReference type="PDBsum" id="3W1Z"/>
<dbReference type="SMR" id="O14368"/>
<dbReference type="BioGRID" id="277493">
    <property type="interactions" value="24"/>
</dbReference>
<dbReference type="DIP" id="DIP-60105N"/>
<dbReference type="FunCoup" id="O14368">
    <property type="interactions" value="188"/>
</dbReference>
<dbReference type="IntAct" id="O14368">
    <property type="interactions" value="1"/>
</dbReference>
<dbReference type="STRING" id="284812.O14368"/>
<dbReference type="iPTMnet" id="O14368"/>
<dbReference type="PaxDb" id="4896-SPBC3E7.02c.1"/>
<dbReference type="EnsemblFungi" id="SPBC3E7.02c.1">
    <property type="protein sequence ID" value="SPBC3E7.02c.1:pep"/>
    <property type="gene ID" value="SPBC3E7.02c"/>
</dbReference>
<dbReference type="GeneID" id="2540977"/>
<dbReference type="KEGG" id="spo:2540977"/>
<dbReference type="PomBase" id="SPBC3E7.02c">
    <property type="gene designation" value="hsp16"/>
</dbReference>
<dbReference type="VEuPathDB" id="FungiDB:SPBC3E7.02c"/>
<dbReference type="eggNOG" id="KOG0710">
    <property type="taxonomic scope" value="Eukaryota"/>
</dbReference>
<dbReference type="HOGENOM" id="CLU_046737_12_0_1"/>
<dbReference type="InParanoid" id="O14368"/>
<dbReference type="OMA" id="WHIRERR"/>
<dbReference type="PhylomeDB" id="O14368"/>
<dbReference type="EvolutionaryTrace" id="O14368"/>
<dbReference type="PRO" id="PR:O14368"/>
<dbReference type="Proteomes" id="UP000002485">
    <property type="component" value="Chromosome II"/>
</dbReference>
<dbReference type="GO" id="GO:0005737">
    <property type="term" value="C:cytoplasm"/>
    <property type="evidence" value="ECO:0000314"/>
    <property type="project" value="PomBase"/>
</dbReference>
<dbReference type="GO" id="GO:0005829">
    <property type="term" value="C:cytosol"/>
    <property type="evidence" value="ECO:0007005"/>
    <property type="project" value="PomBase"/>
</dbReference>
<dbReference type="GO" id="GO:0005634">
    <property type="term" value="C:nucleus"/>
    <property type="evidence" value="ECO:0000314"/>
    <property type="project" value="PomBase"/>
</dbReference>
<dbReference type="GO" id="GO:0140453">
    <property type="term" value="C:protein aggregate center"/>
    <property type="evidence" value="ECO:0000314"/>
    <property type="project" value="PomBase"/>
</dbReference>
<dbReference type="GO" id="GO:0042802">
    <property type="term" value="F:identical protein binding"/>
    <property type="evidence" value="ECO:0000353"/>
    <property type="project" value="IntAct"/>
</dbReference>
<dbReference type="GO" id="GO:0044183">
    <property type="term" value="F:protein folding chaperone"/>
    <property type="evidence" value="ECO:0000314"/>
    <property type="project" value="PomBase"/>
</dbReference>
<dbReference type="GO" id="GO:0051082">
    <property type="term" value="F:unfolded protein binding"/>
    <property type="evidence" value="ECO:0000314"/>
    <property type="project" value="PomBase"/>
</dbReference>
<dbReference type="GO" id="GO:0034605">
    <property type="term" value="P:cellular response to heat"/>
    <property type="evidence" value="ECO:0000270"/>
    <property type="project" value="PomBase"/>
</dbReference>
<dbReference type="GO" id="GO:0071218">
    <property type="term" value="P:cellular response to misfolded protein"/>
    <property type="evidence" value="ECO:0000315"/>
    <property type="project" value="PomBase"/>
</dbReference>
<dbReference type="GO" id="GO:0034620">
    <property type="term" value="P:cellular response to unfolded protein"/>
    <property type="evidence" value="ECO:0000314"/>
    <property type="project" value="PomBase"/>
</dbReference>
<dbReference type="GO" id="GO:0051259">
    <property type="term" value="P:protein complex oligomerization"/>
    <property type="evidence" value="ECO:0000318"/>
    <property type="project" value="GO_Central"/>
</dbReference>
<dbReference type="GO" id="GO:0006457">
    <property type="term" value="P:protein folding"/>
    <property type="evidence" value="ECO:0000318"/>
    <property type="project" value="GO_Central"/>
</dbReference>
<dbReference type="GO" id="GO:0009408">
    <property type="term" value="P:response to heat"/>
    <property type="evidence" value="ECO:0000318"/>
    <property type="project" value="GO_Central"/>
</dbReference>
<dbReference type="GO" id="GO:0042542">
    <property type="term" value="P:response to hydrogen peroxide"/>
    <property type="evidence" value="ECO:0000318"/>
    <property type="project" value="GO_Central"/>
</dbReference>
<dbReference type="GO" id="GO:0009651">
    <property type="term" value="P:response to salt stress"/>
    <property type="evidence" value="ECO:0000318"/>
    <property type="project" value="GO_Central"/>
</dbReference>
<dbReference type="CDD" id="cd06464">
    <property type="entry name" value="ACD_sHsps-like"/>
    <property type="match status" value="1"/>
</dbReference>
<dbReference type="FunFam" id="2.60.40.790:FF:000072">
    <property type="entry name" value="Small heat shock protein HSP16.5"/>
    <property type="match status" value="1"/>
</dbReference>
<dbReference type="Gene3D" id="2.60.40.790">
    <property type="match status" value="1"/>
</dbReference>
<dbReference type="InterPro" id="IPR002068">
    <property type="entry name" value="A-crystallin/Hsp20_dom"/>
</dbReference>
<dbReference type="InterPro" id="IPR008978">
    <property type="entry name" value="HSP20-like_chaperone"/>
</dbReference>
<dbReference type="InterPro" id="IPR031107">
    <property type="entry name" value="Small_HSP"/>
</dbReference>
<dbReference type="PANTHER" id="PTHR11527">
    <property type="entry name" value="HEAT-SHOCK PROTEIN 20 FAMILY MEMBER"/>
    <property type="match status" value="1"/>
</dbReference>
<dbReference type="Pfam" id="PF00011">
    <property type="entry name" value="HSP20"/>
    <property type="match status" value="1"/>
</dbReference>
<dbReference type="SUPFAM" id="SSF49764">
    <property type="entry name" value="HSP20-like chaperones"/>
    <property type="match status" value="1"/>
</dbReference>
<dbReference type="PROSITE" id="PS01031">
    <property type="entry name" value="SHSP"/>
    <property type="match status" value="1"/>
</dbReference>
<protein>
    <recommendedName>
        <fullName>Heat shock protein 16</fullName>
    </recommendedName>
    <alternativeName>
        <fullName>16 kDa heat shock protein</fullName>
    </alternativeName>
</protein>
<comment type="interaction">
    <interactant intactId="EBI-16030516">
        <id>O14368</id>
    </interactant>
    <interactant intactId="EBI-16030516">
        <id>O14368</id>
        <label>hsp16</label>
    </interactant>
    <organismsDiffer>false</organismsDiffer>
    <experiments>5</experiments>
</comment>
<comment type="subcellular location">
    <subcellularLocation>
        <location evidence="2">Cytoplasm</location>
    </subcellularLocation>
    <subcellularLocation>
        <location evidence="2">Nucleus</location>
    </subcellularLocation>
</comment>
<comment type="induction">
    <text evidence="2">By heat shock, and under conditions of deoxyribonucleotide depletion and DNA damage.</text>
</comment>
<comment type="miscellaneous">
    <text>Regulated by the spc1 MAPK signaling pathway.</text>
</comment>
<comment type="similarity">
    <text evidence="1">Belongs to the small heat shock protein (HSP20) family.</text>
</comment>
<keyword id="KW-0002">3D-structure</keyword>
<keyword id="KW-0963">Cytoplasm</keyword>
<keyword id="KW-0539">Nucleus</keyword>
<keyword id="KW-1185">Reference proteome</keyword>
<keyword id="KW-0346">Stress response</keyword>
<proteinExistence type="evidence at protein level"/>
<name>HSP16_SCHPO</name>
<accession>O14368</accession>
<reference key="1">
    <citation type="journal article" date="1999" name="Gene">
        <title>Ras-mediated signaling pathway regulates the expression of a low-molecular-weight heat-shock protein in fission yeast.</title>
        <authorList>
            <person name="Danjoh I."/>
            <person name="Fujiyama A."/>
        </authorList>
    </citation>
    <scope>NUCLEOTIDE SEQUENCE [GENOMIC DNA]</scope>
    <source>
        <strain>JY746</strain>
    </source>
</reference>
<reference key="2">
    <citation type="submission" date="1997-10" db="EMBL/GenBank/DDBJ databases">
        <title>hsp16, a major fission yeast heat shock protein homologous to the budding yeast hsp26.</title>
        <authorList>
            <person name="Lenaers G."/>
            <person name="Perret E."/>
            <person name="Dumont X."/>
            <person name="Picard A."/>
            <person name="Caput D."/>
        </authorList>
    </citation>
    <scope>NUCLEOTIDE SEQUENCE [MRNA]</scope>
    <source>
        <strain>972 / ATCC 24843</strain>
    </source>
</reference>
<reference key="3">
    <citation type="journal article" date="2002" name="Nature">
        <title>The genome sequence of Schizosaccharomyces pombe.</title>
        <authorList>
            <person name="Wood V."/>
            <person name="Gwilliam R."/>
            <person name="Rajandream M.A."/>
            <person name="Lyne M.H."/>
            <person name="Lyne R."/>
            <person name="Stewart A."/>
            <person name="Sgouros J.G."/>
            <person name="Peat N."/>
            <person name="Hayles J."/>
            <person name="Baker S.G."/>
            <person name="Basham D."/>
            <person name="Bowman S."/>
            <person name="Brooks K."/>
            <person name="Brown D."/>
            <person name="Brown S."/>
            <person name="Chillingworth T."/>
            <person name="Churcher C.M."/>
            <person name="Collins M."/>
            <person name="Connor R."/>
            <person name="Cronin A."/>
            <person name="Davis P."/>
            <person name="Feltwell T."/>
            <person name="Fraser A."/>
            <person name="Gentles S."/>
            <person name="Goble A."/>
            <person name="Hamlin N."/>
            <person name="Harris D.E."/>
            <person name="Hidalgo J."/>
            <person name="Hodgson G."/>
            <person name="Holroyd S."/>
            <person name="Hornsby T."/>
            <person name="Howarth S."/>
            <person name="Huckle E.J."/>
            <person name="Hunt S."/>
            <person name="Jagels K."/>
            <person name="James K.D."/>
            <person name="Jones L."/>
            <person name="Jones M."/>
            <person name="Leather S."/>
            <person name="McDonald S."/>
            <person name="McLean J."/>
            <person name="Mooney P."/>
            <person name="Moule S."/>
            <person name="Mungall K.L."/>
            <person name="Murphy L.D."/>
            <person name="Niblett D."/>
            <person name="Odell C."/>
            <person name="Oliver K."/>
            <person name="O'Neil S."/>
            <person name="Pearson D."/>
            <person name="Quail M.A."/>
            <person name="Rabbinowitsch E."/>
            <person name="Rutherford K.M."/>
            <person name="Rutter S."/>
            <person name="Saunders D."/>
            <person name="Seeger K."/>
            <person name="Sharp S."/>
            <person name="Skelton J."/>
            <person name="Simmonds M.N."/>
            <person name="Squares R."/>
            <person name="Squares S."/>
            <person name="Stevens K."/>
            <person name="Taylor K."/>
            <person name="Taylor R.G."/>
            <person name="Tivey A."/>
            <person name="Walsh S.V."/>
            <person name="Warren T."/>
            <person name="Whitehead S."/>
            <person name="Woodward J.R."/>
            <person name="Volckaert G."/>
            <person name="Aert R."/>
            <person name="Robben J."/>
            <person name="Grymonprez B."/>
            <person name="Weltjens I."/>
            <person name="Vanstreels E."/>
            <person name="Rieger M."/>
            <person name="Schaefer M."/>
            <person name="Mueller-Auer S."/>
            <person name="Gabel C."/>
            <person name="Fuchs M."/>
            <person name="Duesterhoeft A."/>
            <person name="Fritzc C."/>
            <person name="Holzer E."/>
            <person name="Moestl D."/>
            <person name="Hilbert H."/>
            <person name="Borzym K."/>
            <person name="Langer I."/>
            <person name="Beck A."/>
            <person name="Lehrach H."/>
            <person name="Reinhardt R."/>
            <person name="Pohl T.M."/>
            <person name="Eger P."/>
            <person name="Zimmermann W."/>
            <person name="Wedler H."/>
            <person name="Wambutt R."/>
            <person name="Purnelle B."/>
            <person name="Goffeau A."/>
            <person name="Cadieu E."/>
            <person name="Dreano S."/>
            <person name="Gloux S."/>
            <person name="Lelaure V."/>
            <person name="Mottier S."/>
            <person name="Galibert F."/>
            <person name="Aves S.J."/>
            <person name="Xiang Z."/>
            <person name="Hunt C."/>
            <person name="Moore K."/>
            <person name="Hurst S.M."/>
            <person name="Lucas M."/>
            <person name="Rochet M."/>
            <person name="Gaillardin C."/>
            <person name="Tallada V.A."/>
            <person name="Garzon A."/>
            <person name="Thode G."/>
            <person name="Daga R.R."/>
            <person name="Cruzado L."/>
            <person name="Jimenez J."/>
            <person name="Sanchez M."/>
            <person name="del Rey F."/>
            <person name="Benito J."/>
            <person name="Dominguez A."/>
            <person name="Revuelta J.L."/>
            <person name="Moreno S."/>
            <person name="Armstrong J."/>
            <person name="Forsburg S.L."/>
            <person name="Cerutti L."/>
            <person name="Lowe T."/>
            <person name="McCombie W.R."/>
            <person name="Paulsen I."/>
            <person name="Potashkin J."/>
            <person name="Shpakovski G.V."/>
            <person name="Ussery D."/>
            <person name="Barrell B.G."/>
            <person name="Nurse P."/>
        </authorList>
    </citation>
    <scope>NUCLEOTIDE SEQUENCE [LARGE SCALE GENOMIC DNA]</scope>
    <source>
        <strain>972 / ATCC 24843</strain>
    </source>
</reference>
<reference key="4">
    <citation type="journal article" date="2001" name="Nucleic Acids Res.">
        <title>Expression of hsp16 in response to nucleotide depletion is regulated via the spc1 MAPK pathway in Schizosaccharomyces pombe.</title>
        <authorList>
            <person name="Taricani L."/>
            <person name="Feilotter H.E."/>
            <person name="Weaver C."/>
            <person name="Young P.G."/>
        </authorList>
    </citation>
    <scope>SUBCELLULAR LOCATION</scope>
    <scope>INDUCTION</scope>
    <scope>REGULATION</scope>
</reference>
<sequence>MSLQPFFGFPPTVNDLFSDFVSYSPRLNNQIPGELSPSIDVHEGKDTVSVDVELPGVKKEDVQVHYDSGKLTISGEVVNERKNESTEGNQRWSERRFGSFSRTITIPAKIDADRIEANFSNGLLTVTLPKVEKSQTKKQIAIK</sequence>
<organism>
    <name type="scientific">Schizosaccharomyces pombe (strain 972 / ATCC 24843)</name>
    <name type="common">Fission yeast</name>
    <dbReference type="NCBI Taxonomy" id="284812"/>
    <lineage>
        <taxon>Eukaryota</taxon>
        <taxon>Fungi</taxon>
        <taxon>Dikarya</taxon>
        <taxon>Ascomycota</taxon>
        <taxon>Taphrinomycotina</taxon>
        <taxon>Schizosaccharomycetes</taxon>
        <taxon>Schizosaccharomycetales</taxon>
        <taxon>Schizosaccharomycetaceae</taxon>
        <taxon>Schizosaccharomyces</taxon>
    </lineage>
</organism>
<feature type="chain" id="PRO_0000126003" description="Heat shock protein 16">
    <location>
        <begin position="1"/>
        <end position="143"/>
    </location>
</feature>
<feature type="domain" description="sHSP" evidence="1">
    <location>
        <begin position="30"/>
        <end position="143"/>
    </location>
</feature>
<feature type="turn" evidence="3">
    <location>
        <begin position="4"/>
        <end position="6"/>
    </location>
</feature>
<feature type="strand" evidence="3">
    <location>
        <begin position="14"/>
        <end position="16"/>
    </location>
</feature>
<feature type="strand" evidence="3">
    <location>
        <begin position="24"/>
        <end position="26"/>
    </location>
</feature>
<feature type="strand" evidence="3">
    <location>
        <begin position="39"/>
        <end position="43"/>
    </location>
</feature>
<feature type="strand" evidence="3">
    <location>
        <begin position="45"/>
        <end position="53"/>
    </location>
</feature>
<feature type="helix" evidence="3">
    <location>
        <begin position="59"/>
        <end position="61"/>
    </location>
</feature>
<feature type="strand" evidence="3">
    <location>
        <begin position="62"/>
        <end position="67"/>
    </location>
</feature>
<feature type="strand" evidence="3">
    <location>
        <begin position="70"/>
        <end position="77"/>
    </location>
</feature>
<feature type="helix" evidence="3">
    <location>
        <begin position="80"/>
        <end position="83"/>
    </location>
</feature>
<feature type="strand" evidence="3">
    <location>
        <begin position="85"/>
        <end position="93"/>
    </location>
</feature>
<feature type="strand" evidence="3">
    <location>
        <begin position="98"/>
        <end position="105"/>
    </location>
</feature>
<feature type="helix" evidence="3">
    <location>
        <begin position="112"/>
        <end position="114"/>
    </location>
</feature>
<feature type="strand" evidence="3">
    <location>
        <begin position="116"/>
        <end position="120"/>
    </location>
</feature>
<feature type="strand" evidence="3">
    <location>
        <begin position="123"/>
        <end position="131"/>
    </location>
</feature>